<proteinExistence type="inferred from homology"/>
<keyword id="KW-1185">Reference proteome</keyword>
<protein>
    <recommendedName>
        <fullName evidence="1">ATP-dependent Clp protease adapter protein ClpS</fullName>
    </recommendedName>
</protein>
<organism>
    <name type="scientific">Ruegeria pomeroyi (strain ATCC 700808 / DSM 15171 / DSS-3)</name>
    <name type="common">Silicibacter pomeroyi</name>
    <dbReference type="NCBI Taxonomy" id="246200"/>
    <lineage>
        <taxon>Bacteria</taxon>
        <taxon>Pseudomonadati</taxon>
        <taxon>Pseudomonadota</taxon>
        <taxon>Alphaproteobacteria</taxon>
        <taxon>Rhodobacterales</taxon>
        <taxon>Roseobacteraceae</taxon>
        <taxon>Ruegeria</taxon>
    </lineage>
</organism>
<accession>Q5LMA7</accession>
<comment type="function">
    <text evidence="1">Involved in the modulation of the specificity of the ClpAP-mediated ATP-dependent protein degradation.</text>
</comment>
<comment type="subunit">
    <text evidence="1">Binds to the N-terminal domain of the chaperone ClpA.</text>
</comment>
<comment type="similarity">
    <text evidence="1">Belongs to the ClpS family.</text>
</comment>
<evidence type="ECO:0000255" key="1">
    <source>
        <dbReference type="HAMAP-Rule" id="MF_00302"/>
    </source>
</evidence>
<evidence type="ECO:0000256" key="2">
    <source>
        <dbReference type="SAM" id="MobiDB-lite"/>
    </source>
</evidence>
<feature type="chain" id="PRO_0000215750" description="ATP-dependent Clp protease adapter protein ClpS">
    <location>
        <begin position="1"/>
        <end position="113"/>
    </location>
</feature>
<feature type="region of interest" description="Disordered" evidence="2">
    <location>
        <begin position="1"/>
        <end position="24"/>
    </location>
</feature>
<sequence length="113" mass="13118">MTAQLHMMSDKHDQDNDASVLLQTRPRTKRPPLYKVLLLNDDYTPMEFVVHVLERFFGMNHAQAFEIMLTVHKKGVAVVGVFSHEIAETKVSLVMDFARRHQHPLQCTMEKED</sequence>
<gene>
    <name evidence="1" type="primary">clpS</name>
    <name type="ordered locus">SPO3656</name>
</gene>
<dbReference type="EMBL" id="CP000031">
    <property type="protein sequence ID" value="AAV96879.1"/>
    <property type="molecule type" value="Genomic_DNA"/>
</dbReference>
<dbReference type="RefSeq" id="WP_011049336.1">
    <property type="nucleotide sequence ID" value="NC_003911.12"/>
</dbReference>
<dbReference type="SMR" id="Q5LMA7"/>
<dbReference type="STRING" id="246200.SPO3656"/>
<dbReference type="PaxDb" id="246200-SPO3656"/>
<dbReference type="KEGG" id="sil:SPO3656"/>
<dbReference type="eggNOG" id="COG2127">
    <property type="taxonomic scope" value="Bacteria"/>
</dbReference>
<dbReference type="HOGENOM" id="CLU_134358_0_0_5"/>
<dbReference type="OrthoDB" id="9796121at2"/>
<dbReference type="Proteomes" id="UP000001023">
    <property type="component" value="Chromosome"/>
</dbReference>
<dbReference type="GO" id="GO:0030163">
    <property type="term" value="P:protein catabolic process"/>
    <property type="evidence" value="ECO:0007669"/>
    <property type="project" value="InterPro"/>
</dbReference>
<dbReference type="GO" id="GO:0006508">
    <property type="term" value="P:proteolysis"/>
    <property type="evidence" value="ECO:0007669"/>
    <property type="project" value="UniProtKB-UniRule"/>
</dbReference>
<dbReference type="FunFam" id="3.30.1390.10:FF:000002">
    <property type="entry name" value="ATP-dependent Clp protease adapter protein ClpS"/>
    <property type="match status" value="1"/>
</dbReference>
<dbReference type="Gene3D" id="3.30.1390.10">
    <property type="match status" value="1"/>
</dbReference>
<dbReference type="HAMAP" id="MF_00302">
    <property type="entry name" value="ClpS"/>
    <property type="match status" value="1"/>
</dbReference>
<dbReference type="InterPro" id="IPR022935">
    <property type="entry name" value="ClpS"/>
</dbReference>
<dbReference type="InterPro" id="IPR003769">
    <property type="entry name" value="ClpS_core"/>
</dbReference>
<dbReference type="InterPro" id="IPR014719">
    <property type="entry name" value="Ribosomal_bL12_C/ClpS-like"/>
</dbReference>
<dbReference type="NCBIfam" id="NF000669">
    <property type="entry name" value="PRK00033.1-2"/>
    <property type="match status" value="1"/>
</dbReference>
<dbReference type="NCBIfam" id="NF000672">
    <property type="entry name" value="PRK00033.1-5"/>
    <property type="match status" value="1"/>
</dbReference>
<dbReference type="PANTHER" id="PTHR33473:SF19">
    <property type="entry name" value="ATP-DEPENDENT CLP PROTEASE ADAPTER PROTEIN CLPS"/>
    <property type="match status" value="1"/>
</dbReference>
<dbReference type="PANTHER" id="PTHR33473">
    <property type="entry name" value="ATP-DEPENDENT CLP PROTEASE ADAPTER PROTEIN CLPS1, CHLOROPLASTIC"/>
    <property type="match status" value="1"/>
</dbReference>
<dbReference type="Pfam" id="PF02617">
    <property type="entry name" value="ClpS"/>
    <property type="match status" value="1"/>
</dbReference>
<dbReference type="SUPFAM" id="SSF54736">
    <property type="entry name" value="ClpS-like"/>
    <property type="match status" value="1"/>
</dbReference>
<name>CLPS_RUEPO</name>
<reference key="1">
    <citation type="journal article" date="2004" name="Nature">
        <title>Genome sequence of Silicibacter pomeroyi reveals adaptations to the marine environment.</title>
        <authorList>
            <person name="Moran M.A."/>
            <person name="Buchan A."/>
            <person name="Gonzalez J.M."/>
            <person name="Heidelberg J.F."/>
            <person name="Whitman W.B."/>
            <person name="Kiene R.P."/>
            <person name="Henriksen J.R."/>
            <person name="King G.M."/>
            <person name="Belas R."/>
            <person name="Fuqua C."/>
            <person name="Brinkac L.M."/>
            <person name="Lewis M."/>
            <person name="Johri S."/>
            <person name="Weaver B."/>
            <person name="Pai G."/>
            <person name="Eisen J.A."/>
            <person name="Rahe E."/>
            <person name="Sheldon W.M."/>
            <person name="Ye W."/>
            <person name="Miller T.R."/>
            <person name="Carlton J."/>
            <person name="Rasko D.A."/>
            <person name="Paulsen I.T."/>
            <person name="Ren Q."/>
            <person name="Daugherty S.C."/>
            <person name="DeBoy R.T."/>
            <person name="Dodson R.J."/>
            <person name="Durkin A.S."/>
            <person name="Madupu R."/>
            <person name="Nelson W.C."/>
            <person name="Sullivan S.A."/>
            <person name="Rosovitz M.J."/>
            <person name="Haft D.H."/>
            <person name="Selengut J."/>
            <person name="Ward N."/>
        </authorList>
    </citation>
    <scope>NUCLEOTIDE SEQUENCE [LARGE SCALE GENOMIC DNA]</scope>
    <source>
        <strain>ATCC 700808 / DSM 15171 / DSS-3</strain>
    </source>
</reference>
<reference key="2">
    <citation type="journal article" date="2014" name="Stand. Genomic Sci.">
        <title>An updated genome annotation for the model marine bacterium Ruegeria pomeroyi DSS-3.</title>
        <authorList>
            <person name="Rivers A.R."/>
            <person name="Smith C.B."/>
            <person name="Moran M.A."/>
        </authorList>
    </citation>
    <scope>GENOME REANNOTATION</scope>
    <source>
        <strain>ATCC 700808 / DSM 15171 / DSS-3</strain>
    </source>
</reference>